<evidence type="ECO:0000255" key="1">
    <source>
        <dbReference type="HAMAP-Rule" id="MF_00011"/>
    </source>
</evidence>
<accession>Q3JZ68</accession>
<name>PURA_STRA1</name>
<feature type="chain" id="PRO_0000224324" description="Adenylosuccinate synthetase">
    <location>
        <begin position="1"/>
        <end position="430"/>
    </location>
</feature>
<feature type="active site" description="Proton acceptor" evidence="1">
    <location>
        <position position="13"/>
    </location>
</feature>
<feature type="active site" description="Proton donor" evidence="1">
    <location>
        <position position="41"/>
    </location>
</feature>
<feature type="binding site" evidence="1">
    <location>
        <begin position="12"/>
        <end position="18"/>
    </location>
    <ligand>
        <name>GTP</name>
        <dbReference type="ChEBI" id="CHEBI:37565"/>
    </ligand>
</feature>
<feature type="binding site" description="in other chain" evidence="1">
    <location>
        <begin position="13"/>
        <end position="16"/>
    </location>
    <ligand>
        <name>IMP</name>
        <dbReference type="ChEBI" id="CHEBI:58053"/>
        <note>ligand shared between dimeric partners</note>
    </ligand>
</feature>
<feature type="binding site" evidence="1">
    <location>
        <position position="13"/>
    </location>
    <ligand>
        <name>Mg(2+)</name>
        <dbReference type="ChEBI" id="CHEBI:18420"/>
    </ligand>
</feature>
<feature type="binding site" description="in other chain" evidence="1">
    <location>
        <begin position="38"/>
        <end position="41"/>
    </location>
    <ligand>
        <name>IMP</name>
        <dbReference type="ChEBI" id="CHEBI:58053"/>
        <note>ligand shared between dimeric partners</note>
    </ligand>
</feature>
<feature type="binding site" evidence="1">
    <location>
        <begin position="40"/>
        <end position="42"/>
    </location>
    <ligand>
        <name>GTP</name>
        <dbReference type="ChEBI" id="CHEBI:37565"/>
    </ligand>
</feature>
<feature type="binding site" evidence="1">
    <location>
        <position position="40"/>
    </location>
    <ligand>
        <name>Mg(2+)</name>
        <dbReference type="ChEBI" id="CHEBI:18420"/>
    </ligand>
</feature>
<feature type="binding site" description="in other chain" evidence="1">
    <location>
        <position position="128"/>
    </location>
    <ligand>
        <name>IMP</name>
        <dbReference type="ChEBI" id="CHEBI:58053"/>
        <note>ligand shared between dimeric partners</note>
    </ligand>
</feature>
<feature type="binding site" evidence="1">
    <location>
        <position position="142"/>
    </location>
    <ligand>
        <name>IMP</name>
        <dbReference type="ChEBI" id="CHEBI:58053"/>
        <note>ligand shared between dimeric partners</note>
    </ligand>
</feature>
<feature type="binding site" description="in other chain" evidence="1">
    <location>
        <position position="223"/>
    </location>
    <ligand>
        <name>IMP</name>
        <dbReference type="ChEBI" id="CHEBI:58053"/>
        <note>ligand shared between dimeric partners</note>
    </ligand>
</feature>
<feature type="binding site" description="in other chain" evidence="1">
    <location>
        <position position="238"/>
    </location>
    <ligand>
        <name>IMP</name>
        <dbReference type="ChEBI" id="CHEBI:58053"/>
        <note>ligand shared between dimeric partners</note>
    </ligand>
</feature>
<feature type="binding site" evidence="1">
    <location>
        <begin position="298"/>
        <end position="304"/>
    </location>
    <ligand>
        <name>substrate</name>
    </ligand>
</feature>
<feature type="binding site" description="in other chain" evidence="1">
    <location>
        <position position="302"/>
    </location>
    <ligand>
        <name>IMP</name>
        <dbReference type="ChEBI" id="CHEBI:58053"/>
        <note>ligand shared between dimeric partners</note>
    </ligand>
</feature>
<feature type="binding site" evidence="1">
    <location>
        <position position="304"/>
    </location>
    <ligand>
        <name>GTP</name>
        <dbReference type="ChEBI" id="CHEBI:37565"/>
    </ligand>
</feature>
<feature type="binding site" evidence="1">
    <location>
        <begin position="330"/>
        <end position="332"/>
    </location>
    <ligand>
        <name>GTP</name>
        <dbReference type="ChEBI" id="CHEBI:37565"/>
    </ligand>
</feature>
<feature type="binding site" evidence="1">
    <location>
        <begin position="412"/>
        <end position="414"/>
    </location>
    <ligand>
        <name>GTP</name>
        <dbReference type="ChEBI" id="CHEBI:37565"/>
    </ligand>
</feature>
<protein>
    <recommendedName>
        <fullName evidence="1">Adenylosuccinate synthetase</fullName>
        <shortName evidence="1">AMPSase</shortName>
        <shortName evidence="1">AdSS</shortName>
        <ecNumber evidence="1">6.3.4.4</ecNumber>
    </recommendedName>
    <alternativeName>
        <fullName evidence="1">IMP--aspartate ligase</fullName>
    </alternativeName>
</protein>
<organism>
    <name type="scientific">Streptococcus agalactiae serotype Ia (strain ATCC 27591 / A909 / CDC SS700)</name>
    <dbReference type="NCBI Taxonomy" id="205921"/>
    <lineage>
        <taxon>Bacteria</taxon>
        <taxon>Bacillati</taxon>
        <taxon>Bacillota</taxon>
        <taxon>Bacilli</taxon>
        <taxon>Lactobacillales</taxon>
        <taxon>Streptococcaceae</taxon>
        <taxon>Streptococcus</taxon>
    </lineage>
</organism>
<gene>
    <name evidence="1" type="primary">purA</name>
    <name type="ordered locus">SAK_1838</name>
</gene>
<sequence>MTSVVVVGTQWGDEGKGKITDFLSADAEVIARYQGGDNAGHTIVIDNKKFKLHLIPSGIFFKEKISVIGNGVVVNPKSLVKELAYLHGEGVTTDNLRISDRAHVILPYHIKLDQLQEDAKGDNKIGTTIKGIGPAYMDKAARVGIRIADLLDREVFAERLKINLAEKNRLFEKMYDSTPLEFDDIFEEYYEYGQQIKQYVTDTSVILNDALDAGKRVLFEGAQGVMLDIDQGTYPFVTSSNPVAGGVTIGSGVGPSKINKVVGVCKAYTSRVGDGPFPTELFDEVGDRIREIGKEYGTTTGRPRRVGWFDSVVMRHSRRVSGITNLSLNSIDVLSGLDTVKICVAYDLDGKRIDYYPASLEQLKRCKPIYEELPGWSEDITACRSLDGLPENARNYVRRVGELVGVRISTFSVGPGREQTNILESVWSNI</sequence>
<dbReference type="EC" id="6.3.4.4" evidence="1"/>
<dbReference type="EMBL" id="CP000114">
    <property type="protein sequence ID" value="ABA44887.1"/>
    <property type="molecule type" value="Genomic_DNA"/>
</dbReference>
<dbReference type="RefSeq" id="WP_000205039.1">
    <property type="nucleotide sequence ID" value="NC_007432.1"/>
</dbReference>
<dbReference type="SMR" id="Q3JZ68"/>
<dbReference type="KEGG" id="sak:SAK_1838"/>
<dbReference type="HOGENOM" id="CLU_029848_0_0_9"/>
<dbReference type="UniPathway" id="UPA00075">
    <property type="reaction ID" value="UER00335"/>
</dbReference>
<dbReference type="GO" id="GO:0005737">
    <property type="term" value="C:cytoplasm"/>
    <property type="evidence" value="ECO:0007669"/>
    <property type="project" value="UniProtKB-SubCell"/>
</dbReference>
<dbReference type="GO" id="GO:0004019">
    <property type="term" value="F:adenylosuccinate synthase activity"/>
    <property type="evidence" value="ECO:0000314"/>
    <property type="project" value="CACAO"/>
</dbReference>
<dbReference type="GO" id="GO:0005525">
    <property type="term" value="F:GTP binding"/>
    <property type="evidence" value="ECO:0007669"/>
    <property type="project" value="UniProtKB-UniRule"/>
</dbReference>
<dbReference type="GO" id="GO:0000287">
    <property type="term" value="F:magnesium ion binding"/>
    <property type="evidence" value="ECO:0007669"/>
    <property type="project" value="UniProtKB-UniRule"/>
</dbReference>
<dbReference type="GO" id="GO:0044208">
    <property type="term" value="P:'de novo' AMP biosynthetic process"/>
    <property type="evidence" value="ECO:0007669"/>
    <property type="project" value="UniProtKB-UniRule"/>
</dbReference>
<dbReference type="GO" id="GO:0046040">
    <property type="term" value="P:IMP metabolic process"/>
    <property type="evidence" value="ECO:0007669"/>
    <property type="project" value="TreeGrafter"/>
</dbReference>
<dbReference type="CDD" id="cd03108">
    <property type="entry name" value="AdSS"/>
    <property type="match status" value="1"/>
</dbReference>
<dbReference type="FunFam" id="1.10.300.10:FF:000001">
    <property type="entry name" value="Adenylosuccinate synthetase"/>
    <property type="match status" value="1"/>
</dbReference>
<dbReference type="FunFam" id="3.90.170.10:FF:000001">
    <property type="entry name" value="Adenylosuccinate synthetase"/>
    <property type="match status" value="1"/>
</dbReference>
<dbReference type="Gene3D" id="3.40.440.10">
    <property type="entry name" value="Adenylosuccinate Synthetase, subunit A, domain 1"/>
    <property type="match status" value="1"/>
</dbReference>
<dbReference type="Gene3D" id="1.10.300.10">
    <property type="entry name" value="Adenylosuccinate Synthetase, subunit A, domain 2"/>
    <property type="match status" value="1"/>
</dbReference>
<dbReference type="Gene3D" id="3.90.170.10">
    <property type="entry name" value="Adenylosuccinate Synthetase, subunit A, domain 3"/>
    <property type="match status" value="1"/>
</dbReference>
<dbReference type="HAMAP" id="MF_00011">
    <property type="entry name" value="Adenylosucc_synth"/>
    <property type="match status" value="1"/>
</dbReference>
<dbReference type="InterPro" id="IPR018220">
    <property type="entry name" value="Adenylosuccin_syn_GTP-bd"/>
</dbReference>
<dbReference type="InterPro" id="IPR033128">
    <property type="entry name" value="Adenylosuccin_syn_Lys_AS"/>
</dbReference>
<dbReference type="InterPro" id="IPR042109">
    <property type="entry name" value="Adenylosuccinate_synth_dom1"/>
</dbReference>
<dbReference type="InterPro" id="IPR042110">
    <property type="entry name" value="Adenylosuccinate_synth_dom2"/>
</dbReference>
<dbReference type="InterPro" id="IPR042111">
    <property type="entry name" value="Adenylosuccinate_synth_dom3"/>
</dbReference>
<dbReference type="InterPro" id="IPR001114">
    <property type="entry name" value="Adenylosuccinate_synthetase"/>
</dbReference>
<dbReference type="InterPro" id="IPR027417">
    <property type="entry name" value="P-loop_NTPase"/>
</dbReference>
<dbReference type="NCBIfam" id="NF002223">
    <property type="entry name" value="PRK01117.1"/>
    <property type="match status" value="1"/>
</dbReference>
<dbReference type="NCBIfam" id="TIGR00184">
    <property type="entry name" value="purA"/>
    <property type="match status" value="1"/>
</dbReference>
<dbReference type="PANTHER" id="PTHR11846">
    <property type="entry name" value="ADENYLOSUCCINATE SYNTHETASE"/>
    <property type="match status" value="1"/>
</dbReference>
<dbReference type="PANTHER" id="PTHR11846:SF0">
    <property type="entry name" value="ADENYLOSUCCINATE SYNTHETASE"/>
    <property type="match status" value="1"/>
</dbReference>
<dbReference type="Pfam" id="PF00709">
    <property type="entry name" value="Adenylsucc_synt"/>
    <property type="match status" value="1"/>
</dbReference>
<dbReference type="SMART" id="SM00788">
    <property type="entry name" value="Adenylsucc_synt"/>
    <property type="match status" value="1"/>
</dbReference>
<dbReference type="SUPFAM" id="SSF52540">
    <property type="entry name" value="P-loop containing nucleoside triphosphate hydrolases"/>
    <property type="match status" value="1"/>
</dbReference>
<dbReference type="PROSITE" id="PS01266">
    <property type="entry name" value="ADENYLOSUCCIN_SYN_1"/>
    <property type="match status" value="1"/>
</dbReference>
<dbReference type="PROSITE" id="PS00513">
    <property type="entry name" value="ADENYLOSUCCIN_SYN_2"/>
    <property type="match status" value="1"/>
</dbReference>
<proteinExistence type="inferred from homology"/>
<reference key="1">
    <citation type="journal article" date="2005" name="Proc. Natl. Acad. Sci. U.S.A.">
        <title>Genome analysis of multiple pathogenic isolates of Streptococcus agalactiae: implications for the microbial 'pan-genome'.</title>
        <authorList>
            <person name="Tettelin H."/>
            <person name="Masignani V."/>
            <person name="Cieslewicz M.J."/>
            <person name="Donati C."/>
            <person name="Medini D."/>
            <person name="Ward N.L."/>
            <person name="Angiuoli S.V."/>
            <person name="Crabtree J."/>
            <person name="Jones A.L."/>
            <person name="Durkin A.S."/>
            <person name="DeBoy R.T."/>
            <person name="Davidsen T.M."/>
            <person name="Mora M."/>
            <person name="Scarselli M."/>
            <person name="Margarit y Ros I."/>
            <person name="Peterson J.D."/>
            <person name="Hauser C.R."/>
            <person name="Sundaram J.P."/>
            <person name="Nelson W.C."/>
            <person name="Madupu R."/>
            <person name="Brinkac L.M."/>
            <person name="Dodson R.J."/>
            <person name="Rosovitz M.J."/>
            <person name="Sullivan S.A."/>
            <person name="Daugherty S.C."/>
            <person name="Haft D.H."/>
            <person name="Selengut J."/>
            <person name="Gwinn M.L."/>
            <person name="Zhou L."/>
            <person name="Zafar N."/>
            <person name="Khouri H."/>
            <person name="Radune D."/>
            <person name="Dimitrov G."/>
            <person name="Watkins K."/>
            <person name="O'Connor K.J."/>
            <person name="Smith S."/>
            <person name="Utterback T.R."/>
            <person name="White O."/>
            <person name="Rubens C.E."/>
            <person name="Grandi G."/>
            <person name="Madoff L.C."/>
            <person name="Kasper D.L."/>
            <person name="Telford J.L."/>
            <person name="Wessels M.R."/>
            <person name="Rappuoli R."/>
            <person name="Fraser C.M."/>
        </authorList>
    </citation>
    <scope>NUCLEOTIDE SEQUENCE [LARGE SCALE GENOMIC DNA]</scope>
    <source>
        <strain>ATCC 27591 / A909 / CDC SS700</strain>
    </source>
</reference>
<comment type="function">
    <text evidence="1">Plays an important role in the de novo pathway of purine nucleotide biosynthesis. Catalyzes the first committed step in the biosynthesis of AMP from IMP.</text>
</comment>
<comment type="catalytic activity">
    <reaction evidence="1">
        <text>IMP + L-aspartate + GTP = N(6)-(1,2-dicarboxyethyl)-AMP + GDP + phosphate + 2 H(+)</text>
        <dbReference type="Rhea" id="RHEA:15753"/>
        <dbReference type="ChEBI" id="CHEBI:15378"/>
        <dbReference type="ChEBI" id="CHEBI:29991"/>
        <dbReference type="ChEBI" id="CHEBI:37565"/>
        <dbReference type="ChEBI" id="CHEBI:43474"/>
        <dbReference type="ChEBI" id="CHEBI:57567"/>
        <dbReference type="ChEBI" id="CHEBI:58053"/>
        <dbReference type="ChEBI" id="CHEBI:58189"/>
        <dbReference type="EC" id="6.3.4.4"/>
    </reaction>
</comment>
<comment type="cofactor">
    <cofactor evidence="1">
        <name>Mg(2+)</name>
        <dbReference type="ChEBI" id="CHEBI:18420"/>
    </cofactor>
    <text evidence="1">Binds 1 Mg(2+) ion per subunit.</text>
</comment>
<comment type="pathway">
    <text evidence="1">Purine metabolism; AMP biosynthesis via de novo pathway; AMP from IMP: step 1/2.</text>
</comment>
<comment type="subunit">
    <text evidence="1">Homodimer.</text>
</comment>
<comment type="subcellular location">
    <subcellularLocation>
        <location evidence="1">Cytoplasm</location>
    </subcellularLocation>
</comment>
<comment type="similarity">
    <text evidence="1">Belongs to the adenylosuccinate synthetase family.</text>
</comment>
<keyword id="KW-0963">Cytoplasm</keyword>
<keyword id="KW-0342">GTP-binding</keyword>
<keyword id="KW-0436">Ligase</keyword>
<keyword id="KW-0460">Magnesium</keyword>
<keyword id="KW-0479">Metal-binding</keyword>
<keyword id="KW-0547">Nucleotide-binding</keyword>
<keyword id="KW-0658">Purine biosynthesis</keyword>